<organism>
    <name type="scientific">Arabidopsis thaliana</name>
    <name type="common">Mouse-ear cress</name>
    <dbReference type="NCBI Taxonomy" id="3702"/>
    <lineage>
        <taxon>Eukaryota</taxon>
        <taxon>Viridiplantae</taxon>
        <taxon>Streptophyta</taxon>
        <taxon>Embryophyta</taxon>
        <taxon>Tracheophyta</taxon>
        <taxon>Spermatophyta</taxon>
        <taxon>Magnoliopsida</taxon>
        <taxon>eudicotyledons</taxon>
        <taxon>Gunneridae</taxon>
        <taxon>Pentapetalae</taxon>
        <taxon>rosids</taxon>
        <taxon>malvids</taxon>
        <taxon>Brassicales</taxon>
        <taxon>Brassicaceae</taxon>
        <taxon>Camelineae</taxon>
        <taxon>Arabidopsis</taxon>
    </lineage>
</organism>
<gene>
    <name evidence="1" type="primary">psaC</name>
    <name type="synonym">frxA</name>
    <name type="ordered locus">AtCg01060</name>
</gene>
<keyword id="KW-0002">3D-structure</keyword>
<keyword id="KW-0004">4Fe-4S</keyword>
<keyword id="KW-0150">Chloroplast</keyword>
<keyword id="KW-0249">Electron transport</keyword>
<keyword id="KW-0408">Iron</keyword>
<keyword id="KW-0411">Iron-sulfur</keyword>
<keyword id="KW-0472">Membrane</keyword>
<keyword id="KW-0479">Metal-binding</keyword>
<keyword id="KW-0560">Oxidoreductase</keyword>
<keyword id="KW-0602">Photosynthesis</keyword>
<keyword id="KW-0603">Photosystem I</keyword>
<keyword id="KW-0934">Plastid</keyword>
<keyword id="KW-1185">Reference proteome</keyword>
<keyword id="KW-0677">Repeat</keyword>
<keyword id="KW-0793">Thylakoid</keyword>
<keyword id="KW-0813">Transport</keyword>
<protein>
    <recommendedName>
        <fullName evidence="1">Photosystem I iron-sulfur center</fullName>
        <ecNumber evidence="1">1.97.1.12</ecNumber>
    </recommendedName>
    <alternativeName>
        <fullName evidence="1">9 kDa polypeptide</fullName>
    </alternativeName>
    <alternativeName>
        <fullName evidence="1">PSI-C</fullName>
    </alternativeName>
    <alternativeName>
        <fullName evidence="1">Photosystem I subunit VII</fullName>
    </alternativeName>
    <alternativeName>
        <fullName evidence="1">PsaC</fullName>
    </alternativeName>
</protein>
<reference key="1">
    <citation type="journal article" date="1999" name="DNA Res.">
        <title>Complete structure of the chloroplast genome of Arabidopsis thaliana.</title>
        <authorList>
            <person name="Sato S."/>
            <person name="Nakamura Y."/>
            <person name="Kaneko T."/>
            <person name="Asamizu E."/>
            <person name="Tabata S."/>
        </authorList>
    </citation>
    <scope>NUCLEOTIDE SEQUENCE [LARGE SCALE GENOMIC DNA]</scope>
    <source>
        <strain>cv. Columbia</strain>
    </source>
</reference>
<reference key="2">
    <citation type="journal article" date="2001" name="J. Exp. Bot.">
        <title>Primary transcripts of ndhD of Liliaceae and Aloaceae require editing of the start and 20th codons.</title>
        <authorList>
            <person name="Lopez-Serrano M."/>
            <person name="del Campo E.M."/>
            <person name="Sabater B."/>
            <person name="Martin M."/>
        </authorList>
    </citation>
    <scope>NUCLEOTIDE SEQUENCE [GENOMIC DNA] OF 68-81</scope>
    <source>
        <tissue>Leaf</tissue>
    </source>
</reference>
<evidence type="ECO:0000255" key="1">
    <source>
        <dbReference type="HAMAP-Rule" id="MF_01303"/>
    </source>
</evidence>
<evidence type="ECO:0007829" key="2">
    <source>
        <dbReference type="PDB" id="8J6Z"/>
    </source>
</evidence>
<dbReference type="EC" id="1.97.1.12" evidence="1"/>
<dbReference type="EMBL" id="AP000423">
    <property type="protein sequence ID" value="BAA84438.1"/>
    <property type="molecule type" value="Genomic_DNA"/>
</dbReference>
<dbReference type="EMBL" id="AJ278354">
    <property type="protein sequence ID" value="CAB96190.1"/>
    <property type="molecule type" value="Genomic_DNA"/>
</dbReference>
<dbReference type="RefSeq" id="NP_051110.1">
    <property type="nucleotide sequence ID" value="NC_000932.1"/>
</dbReference>
<dbReference type="PDB" id="7WFD">
    <property type="method" value="EM"/>
    <property type="resolution" value="3.25 A"/>
    <property type="chains" value="AC=1-81"/>
</dbReference>
<dbReference type="PDB" id="7WFE">
    <property type="method" value="EM"/>
    <property type="resolution" value="3.25 A"/>
    <property type="chains" value="BC=1-81"/>
</dbReference>
<dbReference type="PDB" id="7WG5">
    <property type="method" value="EM"/>
    <property type="resolution" value="3.89 A"/>
    <property type="chains" value="AC/BC=1-81"/>
</dbReference>
<dbReference type="PDB" id="8J6Z">
    <property type="method" value="EM"/>
    <property type="resolution" value="2.79 A"/>
    <property type="chains" value="C=1-81"/>
</dbReference>
<dbReference type="PDB" id="8J7A">
    <property type="method" value="EM"/>
    <property type="resolution" value="3.06 A"/>
    <property type="chains" value="C=1-81"/>
</dbReference>
<dbReference type="PDB" id="8J7B">
    <property type="method" value="EM"/>
    <property type="resolution" value="3.22 A"/>
    <property type="chains" value="C=1-81"/>
</dbReference>
<dbReference type="PDBsum" id="7WFD"/>
<dbReference type="PDBsum" id="7WFE"/>
<dbReference type="PDBsum" id="7WG5"/>
<dbReference type="PDBsum" id="8J6Z"/>
<dbReference type="PDBsum" id="8J7A"/>
<dbReference type="PDBsum" id="8J7B"/>
<dbReference type="EMDB" id="EMD-32462"/>
<dbReference type="EMDB" id="EMD-32463"/>
<dbReference type="EMDB" id="EMD-32477"/>
<dbReference type="EMDB" id="EMD-36021"/>
<dbReference type="EMDB" id="EMD-36036"/>
<dbReference type="EMDB" id="EMD-36037"/>
<dbReference type="SMR" id="P62090"/>
<dbReference type="BioGRID" id="29954">
    <property type="interactions" value="2"/>
</dbReference>
<dbReference type="FunCoup" id="P62090">
    <property type="interactions" value="225"/>
</dbReference>
<dbReference type="STRING" id="3702.P62090"/>
<dbReference type="TCDB" id="5.B.4.1.1">
    <property type="family name" value="the plant photosystem i supercomplex (psi) family"/>
</dbReference>
<dbReference type="iPTMnet" id="P62090"/>
<dbReference type="PaxDb" id="3702-ATCG01060.1"/>
<dbReference type="ProteomicsDB" id="226347"/>
<dbReference type="EnsemblPlants" id="ATCG01060.1">
    <property type="protein sequence ID" value="ATCG01060.1"/>
    <property type="gene ID" value="ATCG01060"/>
</dbReference>
<dbReference type="GeneID" id="844750"/>
<dbReference type="Gramene" id="ATCG01060.1">
    <property type="protein sequence ID" value="ATCG01060.1"/>
    <property type="gene ID" value="ATCG01060"/>
</dbReference>
<dbReference type="KEGG" id="ath:ArthCp075"/>
<dbReference type="Araport" id="ATCG01060"/>
<dbReference type="TAIR" id="ATCG01060">
    <property type="gene designation" value="PSAC"/>
</dbReference>
<dbReference type="eggNOG" id="ENOG502S26M">
    <property type="taxonomic scope" value="Eukaryota"/>
</dbReference>
<dbReference type="HOGENOM" id="CLU_139698_8_0_1"/>
<dbReference type="InParanoid" id="P62090"/>
<dbReference type="OMA" id="GHMSHAV"/>
<dbReference type="BioCyc" id="MetaCyc:MONOMER-1097"/>
<dbReference type="PRO" id="PR:P62090"/>
<dbReference type="Proteomes" id="UP000006548">
    <property type="component" value="Chloroplast Pltd"/>
</dbReference>
<dbReference type="ExpressionAtlas" id="P62090">
    <property type="expression patterns" value="baseline and differential"/>
</dbReference>
<dbReference type="GO" id="GO:0009507">
    <property type="term" value="C:chloroplast"/>
    <property type="evidence" value="ECO:0007005"/>
    <property type="project" value="TAIR"/>
</dbReference>
<dbReference type="GO" id="GO:0009533">
    <property type="term" value="C:chloroplast stromal thylakoid"/>
    <property type="evidence" value="ECO:0000304"/>
    <property type="project" value="TAIR"/>
</dbReference>
<dbReference type="GO" id="GO:0009534">
    <property type="term" value="C:chloroplast thylakoid"/>
    <property type="evidence" value="ECO:0007005"/>
    <property type="project" value="TAIR"/>
</dbReference>
<dbReference type="GO" id="GO:0009535">
    <property type="term" value="C:chloroplast thylakoid membrane"/>
    <property type="evidence" value="ECO:0007005"/>
    <property type="project" value="TAIR"/>
</dbReference>
<dbReference type="GO" id="GO:0009522">
    <property type="term" value="C:photosystem I"/>
    <property type="evidence" value="ECO:0000304"/>
    <property type="project" value="TAIR"/>
</dbReference>
<dbReference type="GO" id="GO:0009536">
    <property type="term" value="C:plastid"/>
    <property type="evidence" value="ECO:0007005"/>
    <property type="project" value="TAIR"/>
</dbReference>
<dbReference type="GO" id="GO:0051539">
    <property type="term" value="F:4 iron, 4 sulfur cluster binding"/>
    <property type="evidence" value="ECO:0007669"/>
    <property type="project" value="UniProtKB-KW"/>
</dbReference>
<dbReference type="GO" id="GO:0009055">
    <property type="term" value="F:electron transfer activity"/>
    <property type="evidence" value="ECO:0007669"/>
    <property type="project" value="UniProtKB-UniRule"/>
</dbReference>
<dbReference type="GO" id="GO:0046872">
    <property type="term" value="F:metal ion binding"/>
    <property type="evidence" value="ECO:0007669"/>
    <property type="project" value="UniProtKB-KW"/>
</dbReference>
<dbReference type="GO" id="GO:0003729">
    <property type="term" value="F:mRNA binding"/>
    <property type="evidence" value="ECO:0000314"/>
    <property type="project" value="TAIR"/>
</dbReference>
<dbReference type="GO" id="GO:0016491">
    <property type="term" value="F:oxidoreductase activity"/>
    <property type="evidence" value="ECO:0007669"/>
    <property type="project" value="UniProtKB-KW"/>
</dbReference>
<dbReference type="GO" id="GO:0015979">
    <property type="term" value="P:photosynthesis"/>
    <property type="evidence" value="ECO:0000270"/>
    <property type="project" value="TAIR"/>
</dbReference>
<dbReference type="GO" id="GO:0009773">
    <property type="term" value="P:photosynthetic electron transport in photosystem I"/>
    <property type="evidence" value="ECO:0007669"/>
    <property type="project" value="InterPro"/>
</dbReference>
<dbReference type="FunFam" id="3.30.70.20:FF:000001">
    <property type="entry name" value="Photosystem I iron-sulfur center"/>
    <property type="match status" value="1"/>
</dbReference>
<dbReference type="Gene3D" id="3.30.70.20">
    <property type="match status" value="1"/>
</dbReference>
<dbReference type="HAMAP" id="MF_01303">
    <property type="entry name" value="PSI_PsaC"/>
    <property type="match status" value="1"/>
</dbReference>
<dbReference type="InterPro" id="IPR017896">
    <property type="entry name" value="4Fe4S_Fe-S-bd"/>
</dbReference>
<dbReference type="InterPro" id="IPR017900">
    <property type="entry name" value="4Fe4S_Fe_S_CS"/>
</dbReference>
<dbReference type="InterPro" id="IPR050157">
    <property type="entry name" value="PSI_iron-sulfur_center"/>
</dbReference>
<dbReference type="InterPro" id="IPR017491">
    <property type="entry name" value="PSI_PsaC"/>
</dbReference>
<dbReference type="NCBIfam" id="TIGR03048">
    <property type="entry name" value="PS_I_psaC"/>
    <property type="match status" value="1"/>
</dbReference>
<dbReference type="PANTHER" id="PTHR24960:SF79">
    <property type="entry name" value="PHOTOSYSTEM I IRON-SULFUR CENTER"/>
    <property type="match status" value="1"/>
</dbReference>
<dbReference type="PANTHER" id="PTHR24960">
    <property type="entry name" value="PHOTOSYSTEM I IRON-SULFUR CENTER-RELATED"/>
    <property type="match status" value="1"/>
</dbReference>
<dbReference type="Pfam" id="PF14697">
    <property type="entry name" value="Fer4_21"/>
    <property type="match status" value="1"/>
</dbReference>
<dbReference type="SUPFAM" id="SSF54862">
    <property type="entry name" value="4Fe-4S ferredoxins"/>
    <property type="match status" value="1"/>
</dbReference>
<dbReference type="PROSITE" id="PS00198">
    <property type="entry name" value="4FE4S_FER_1"/>
    <property type="match status" value="2"/>
</dbReference>
<dbReference type="PROSITE" id="PS51379">
    <property type="entry name" value="4FE4S_FER_2"/>
    <property type="match status" value="2"/>
</dbReference>
<feature type="chain" id="PRO_0000061970" description="Photosystem I iron-sulfur center">
    <location>
        <begin position="1"/>
        <end position="81"/>
    </location>
</feature>
<feature type="domain" description="4Fe-4S ferredoxin-type 1" evidence="1">
    <location>
        <begin position="2"/>
        <end position="31"/>
    </location>
</feature>
<feature type="domain" description="4Fe-4S ferredoxin-type 2" evidence="1">
    <location>
        <begin position="39"/>
        <end position="68"/>
    </location>
</feature>
<feature type="binding site" evidence="1">
    <location>
        <position position="11"/>
    </location>
    <ligand>
        <name>[4Fe-4S] cluster</name>
        <dbReference type="ChEBI" id="CHEBI:49883"/>
        <label>1</label>
    </ligand>
</feature>
<feature type="binding site" evidence="1">
    <location>
        <position position="14"/>
    </location>
    <ligand>
        <name>[4Fe-4S] cluster</name>
        <dbReference type="ChEBI" id="CHEBI:49883"/>
        <label>1</label>
    </ligand>
</feature>
<feature type="binding site" evidence="1">
    <location>
        <position position="17"/>
    </location>
    <ligand>
        <name>[4Fe-4S] cluster</name>
        <dbReference type="ChEBI" id="CHEBI:49883"/>
        <label>1</label>
    </ligand>
</feature>
<feature type="binding site" evidence="1">
    <location>
        <position position="21"/>
    </location>
    <ligand>
        <name>[4Fe-4S] cluster</name>
        <dbReference type="ChEBI" id="CHEBI:49883"/>
        <label>2</label>
    </ligand>
</feature>
<feature type="binding site" evidence="1">
    <location>
        <position position="48"/>
    </location>
    <ligand>
        <name>[4Fe-4S] cluster</name>
        <dbReference type="ChEBI" id="CHEBI:49883"/>
        <label>2</label>
    </ligand>
</feature>
<feature type="binding site" evidence="1">
    <location>
        <position position="51"/>
    </location>
    <ligand>
        <name>[4Fe-4S] cluster</name>
        <dbReference type="ChEBI" id="CHEBI:49883"/>
        <label>2</label>
    </ligand>
</feature>
<feature type="binding site" evidence="1">
    <location>
        <position position="54"/>
    </location>
    <ligand>
        <name>[4Fe-4S] cluster</name>
        <dbReference type="ChEBI" id="CHEBI:49883"/>
        <label>2</label>
    </ligand>
</feature>
<feature type="binding site" evidence="1">
    <location>
        <position position="58"/>
    </location>
    <ligand>
        <name>[4Fe-4S] cluster</name>
        <dbReference type="ChEBI" id="CHEBI:49883"/>
        <label>1</label>
    </ligand>
</feature>
<feature type="strand" evidence="2">
    <location>
        <begin position="4"/>
        <end position="8"/>
    </location>
</feature>
<feature type="helix" evidence="2">
    <location>
        <begin position="16"/>
        <end position="20"/>
    </location>
</feature>
<feature type="strand" evidence="2">
    <location>
        <begin position="22"/>
        <end position="24"/>
    </location>
</feature>
<feature type="strand" evidence="2">
    <location>
        <begin position="27"/>
        <end position="30"/>
    </location>
</feature>
<feature type="strand" evidence="2">
    <location>
        <begin position="32"/>
        <end position="34"/>
    </location>
</feature>
<feature type="strand" evidence="2">
    <location>
        <begin position="38"/>
        <end position="41"/>
    </location>
</feature>
<feature type="helix" evidence="2">
    <location>
        <begin position="45"/>
        <end position="47"/>
    </location>
</feature>
<feature type="helix" evidence="2">
    <location>
        <begin position="53"/>
        <end position="57"/>
    </location>
</feature>
<feature type="strand" evidence="2">
    <location>
        <begin position="60"/>
        <end position="62"/>
    </location>
</feature>
<feature type="strand" evidence="2">
    <location>
        <begin position="64"/>
        <end position="68"/>
    </location>
</feature>
<feature type="turn" evidence="2">
    <location>
        <begin position="74"/>
        <end position="78"/>
    </location>
</feature>
<geneLocation type="chloroplast"/>
<name>PSAC_ARATH</name>
<sequence>MSHSVKIYDTCIGCTQCVRACPTDVLEMIPWDGCKAKQIASAPRTEDCVGCKRCESACPTDFLSVRVYLWHETTRSMGLAY</sequence>
<comment type="function">
    <text evidence="1">Apoprotein for the two 4Fe-4S centers FA and FB of photosystem I (PSI); essential for photochemical activity. FB is the terminal electron acceptor of PSI, donating electrons to ferredoxin. The C-terminus interacts with PsaA/B/D and helps assemble the protein into the PSI complex. Required for binding of PsaD and PsaE to PSI. PSI is a plastocyanin-ferredoxin oxidoreductase, converting photonic excitation into a charge separation, which transfers an electron from the donor P700 chlorophyll pair to the spectroscopically characterized acceptors A0, A1, FX, FA and FB in turn.</text>
</comment>
<comment type="catalytic activity">
    <reaction evidence="1">
        <text>reduced [plastocyanin] + hnu + oxidized [2Fe-2S]-[ferredoxin] = oxidized [plastocyanin] + reduced [2Fe-2S]-[ferredoxin]</text>
        <dbReference type="Rhea" id="RHEA:30407"/>
        <dbReference type="Rhea" id="RHEA-COMP:10000"/>
        <dbReference type="Rhea" id="RHEA-COMP:10001"/>
        <dbReference type="Rhea" id="RHEA-COMP:10039"/>
        <dbReference type="Rhea" id="RHEA-COMP:10040"/>
        <dbReference type="ChEBI" id="CHEBI:29036"/>
        <dbReference type="ChEBI" id="CHEBI:30212"/>
        <dbReference type="ChEBI" id="CHEBI:33737"/>
        <dbReference type="ChEBI" id="CHEBI:33738"/>
        <dbReference type="ChEBI" id="CHEBI:49552"/>
        <dbReference type="EC" id="1.97.1.12"/>
    </reaction>
</comment>
<comment type="cofactor">
    <cofactor evidence="1">
        <name>[4Fe-4S] cluster</name>
        <dbReference type="ChEBI" id="CHEBI:49883"/>
    </cofactor>
    <text evidence="1">Binds 2 [4Fe-4S] clusters. Cluster 2 is most probably the spectroscopically characterized electron acceptor FA and cluster 1 is most probably FB.</text>
</comment>
<comment type="subunit">
    <text evidence="1">The eukaryotic PSI reaction center is composed of at least 11 subunits.</text>
</comment>
<comment type="subcellular location">
    <subcellularLocation>
        <location evidence="1">Plastid</location>
        <location evidence="1">Chloroplast thylakoid membrane</location>
        <topology evidence="1">Peripheral membrane protein</topology>
        <orientation evidence="1">Stromal side</orientation>
    </subcellularLocation>
</comment>
<proteinExistence type="evidence at protein level"/>
<accession>P62090</accession>
<accession>P07136</accession>
<accession>P25252</accession>
<accession>Q9MRU0</accession>
<accession>Q9T2J4</accession>